<comment type="function">
    <text evidence="5">Myosin regulatory subunit that plays an important role in regulation of both smooth muscle and nonmuscle cell contractile activity via its phosphorylation. Phosphorylation triggers actin polymerization in vascular smooth muscle. Implicated in cytokinesis, receptor capping, and cell locomotion.</text>
</comment>
<comment type="subunit">
    <text evidence="2">Myosin is a hexamer of 2 heavy chains and 4 light chains: interacts with myosin heavy chain MYO19.</text>
</comment>
<comment type="interaction">
    <interactant intactId="EBI-1642165">
        <id>O14950</id>
    </interactant>
    <interactant intactId="EBI-353944">
        <id>P60709</id>
        <label>ACTB</label>
    </interactant>
    <organismsDiffer>false</organismsDiffer>
    <experiments>3</experiments>
</comment>
<comment type="interaction">
    <interactant intactId="EBI-1642165">
        <id>O14950</id>
    </interactant>
    <interactant intactId="EBI-1052928">
        <id>P35749</id>
        <label>MYH11</label>
    </interactant>
    <organismsDiffer>false</organismsDiffer>
    <experiments>2</experiments>
</comment>
<comment type="interaction">
    <interactant intactId="EBI-1642165">
        <id>O14950</id>
    </interactant>
    <interactant intactId="EBI-12028784">
        <id>Q6X4W1-2</id>
        <label>NSMF</label>
    </interactant>
    <organismsDiffer>false</organismsDiffer>
    <experiments>3</experiments>
</comment>
<comment type="interaction">
    <interactant intactId="EBI-1642165">
        <id>O14950</id>
    </interactant>
    <interactant intactId="EBI-4287135">
        <id>Q7Z3V4</id>
        <label>UBE3B</label>
    </interactant>
    <organismsDiffer>false</organismsDiffer>
    <experiments>2</experiments>
</comment>
<comment type="tissue specificity">
    <text evidence="6 12">Ubiquitously expressed in various hematopoietic cells.</text>
</comment>
<comment type="PTM">
    <text evidence="7 8 10 11">Phosphorylation increases the actin-activated myosin ATPase activity and thereby regulates the contractile activity. It is required to generate the driving force in the migration of the cells but not necessary for localization of myosin-2 at the leading edge. Phosphorylation is reduced following epigallocatechin-3-O-gallate treatment.</text>
</comment>
<comment type="miscellaneous">
    <text evidence="1">This chain binds calcium.</text>
</comment>
<comment type="sequence caution" evidence="13">
    <conflict type="frameshift">
        <sequence resource="EMBL-CDS" id="AAP73808"/>
    </conflict>
</comment>
<dbReference type="EMBL" id="D82058">
    <property type="protein sequence ID" value="BAB88918.1"/>
    <property type="molecule type" value="mRNA"/>
</dbReference>
<dbReference type="EMBL" id="AB046614">
    <property type="protein sequence ID" value="BAB62403.1"/>
    <property type="molecule type" value="mRNA"/>
</dbReference>
<dbReference type="EMBL" id="D50372">
    <property type="protein sequence ID" value="BAA23323.1"/>
    <property type="molecule type" value="mRNA"/>
</dbReference>
<dbReference type="EMBL" id="U26162">
    <property type="protein sequence ID" value="AAA67367.1"/>
    <property type="molecule type" value="mRNA"/>
</dbReference>
<dbReference type="EMBL" id="AY320408">
    <property type="protein sequence ID" value="AAP73808.1"/>
    <property type="status" value="ALT_FRAME"/>
    <property type="molecule type" value="mRNA"/>
</dbReference>
<dbReference type="EMBL" id="AK291726">
    <property type="protein sequence ID" value="BAF84415.1"/>
    <property type="molecule type" value="mRNA"/>
</dbReference>
<dbReference type="EMBL" id="CH471113">
    <property type="protein sequence ID" value="EAX01675.1"/>
    <property type="molecule type" value="Genomic_DNA"/>
</dbReference>
<dbReference type="EMBL" id="CH471113">
    <property type="protein sequence ID" value="EAX01676.1"/>
    <property type="molecule type" value="Genomic_DNA"/>
</dbReference>
<dbReference type="EMBL" id="CH471113">
    <property type="protein sequence ID" value="EAX01677.1"/>
    <property type="molecule type" value="Genomic_DNA"/>
</dbReference>
<dbReference type="EMBL" id="BC004994">
    <property type="protein sequence ID" value="AAH04994.1"/>
    <property type="molecule type" value="mRNA"/>
</dbReference>
<dbReference type="CCDS" id="CCDS11831.1"/>
<dbReference type="RefSeq" id="NP_001138416.1">
    <property type="nucleotide sequence ID" value="NM_001144944.1"/>
</dbReference>
<dbReference type="RefSeq" id="NP_001138417.1">
    <property type="nucleotide sequence ID" value="NM_001144945.1"/>
</dbReference>
<dbReference type="RefSeq" id="NP_291024.1">
    <property type="nucleotide sequence ID" value="NM_033546.4"/>
</dbReference>
<dbReference type="SMR" id="O14950"/>
<dbReference type="BioGRID" id="125182">
    <property type="interactions" value="131"/>
</dbReference>
<dbReference type="FunCoup" id="O14950">
    <property type="interactions" value="1719"/>
</dbReference>
<dbReference type="IntAct" id="O14950">
    <property type="interactions" value="69"/>
</dbReference>
<dbReference type="MINT" id="O14950"/>
<dbReference type="STRING" id="9606.ENSP00000463559"/>
<dbReference type="ChEMBL" id="CHEMBL4295652"/>
<dbReference type="GlyGen" id="O14950">
    <property type="glycosylation" value="1 site, 1 O-linked glycan (1 site)"/>
</dbReference>
<dbReference type="iPTMnet" id="O14950"/>
<dbReference type="MetOSite" id="O14950"/>
<dbReference type="PhosphoSitePlus" id="O14950"/>
<dbReference type="SwissPalm" id="O14950"/>
<dbReference type="BioMuta" id="MYL12B"/>
<dbReference type="jPOST" id="O14950"/>
<dbReference type="MassIVE" id="O14950"/>
<dbReference type="PaxDb" id="9606-ENSP00000463559"/>
<dbReference type="PeptideAtlas" id="O14950"/>
<dbReference type="ProteomicsDB" id="48333"/>
<dbReference type="Pumba" id="O14950"/>
<dbReference type="TopDownProteomics" id="O14950"/>
<dbReference type="Antibodypedia" id="21913">
    <property type="antibodies" value="183 antibodies from 24 providers"/>
</dbReference>
<dbReference type="DNASU" id="10627"/>
<dbReference type="Ensembl" id="ENST00000237500.10">
    <property type="protein sequence ID" value="ENSP00000237500.5"/>
    <property type="gene ID" value="ENSG00000118680.14"/>
</dbReference>
<dbReference type="Ensembl" id="ENST00000400175.9">
    <property type="protein sequence ID" value="ENSP00000383037.5"/>
    <property type="gene ID" value="ENSG00000118680.14"/>
</dbReference>
<dbReference type="Ensembl" id="ENST00000581193.5">
    <property type="protein sequence ID" value="ENSP00000463559.1"/>
    <property type="gene ID" value="ENSG00000118680.14"/>
</dbReference>
<dbReference type="Ensembl" id="ENST00000584539.1">
    <property type="protein sequence ID" value="ENSP00000464464.1"/>
    <property type="gene ID" value="ENSG00000118680.14"/>
</dbReference>
<dbReference type="Ensembl" id="ENST00000648965.1">
    <property type="protein sequence ID" value="ENSP00000496809.1"/>
    <property type="gene ID" value="ENSG00000118680.14"/>
</dbReference>
<dbReference type="GeneID" id="103910"/>
<dbReference type="KEGG" id="hsa:103910"/>
<dbReference type="MANE-Select" id="ENST00000237500.10">
    <property type="protein sequence ID" value="ENSP00000237500.5"/>
    <property type="RefSeq nucleotide sequence ID" value="NM_033546.4"/>
    <property type="RefSeq protein sequence ID" value="NP_291024.1"/>
</dbReference>
<dbReference type="UCSC" id="uc002klt.5">
    <property type="organism name" value="human"/>
</dbReference>
<dbReference type="AGR" id="HGNC:16701"/>
<dbReference type="AGR" id="HGNC:29827"/>
<dbReference type="CTD" id="103910"/>
<dbReference type="CTD" id="10627"/>
<dbReference type="DisGeNET" id="103910"/>
<dbReference type="DisGeNET" id="10627"/>
<dbReference type="GeneCards" id="MYL12B"/>
<dbReference type="HGNC" id="HGNC:29827">
    <property type="gene designation" value="MYL12B"/>
</dbReference>
<dbReference type="HPA" id="ENSG00000118680">
    <property type="expression patterns" value="Low tissue specificity"/>
</dbReference>
<dbReference type="neXtProt" id="NX_O14950"/>
<dbReference type="OpenTargets" id="ENSG00000118680"/>
<dbReference type="PharmGKB" id="PA164723274"/>
<dbReference type="VEuPathDB" id="HostDB:ENSG00000118680"/>
<dbReference type="eggNOG" id="KOG0031">
    <property type="taxonomic scope" value="Eukaryota"/>
</dbReference>
<dbReference type="GeneTree" id="ENSGT00940000153607"/>
<dbReference type="HOGENOM" id="CLU_061288_9_3_1"/>
<dbReference type="InParanoid" id="O14950"/>
<dbReference type="OMA" id="AHGPINF"/>
<dbReference type="OrthoDB" id="9520007at2759"/>
<dbReference type="PAN-GO" id="O14950">
    <property type="GO annotations" value="5 GO annotations based on evolutionary models"/>
</dbReference>
<dbReference type="PhylomeDB" id="O14950"/>
<dbReference type="TreeFam" id="TF314218"/>
<dbReference type="PathwayCommons" id="O14950"/>
<dbReference type="Reactome" id="R-HSA-3928663">
    <property type="pathway name" value="EPHA-mediated growth cone collapse"/>
</dbReference>
<dbReference type="Reactome" id="R-HSA-416572">
    <property type="pathway name" value="Sema4D induced cell migration and growth-cone collapse"/>
</dbReference>
<dbReference type="Reactome" id="R-HSA-445355">
    <property type="pathway name" value="Smooth Muscle Contraction"/>
</dbReference>
<dbReference type="Reactome" id="R-HSA-5625740">
    <property type="pathway name" value="RHO GTPases activate PKNs"/>
</dbReference>
<dbReference type="Reactome" id="R-HSA-5625900">
    <property type="pathway name" value="RHO GTPases activate CIT"/>
</dbReference>
<dbReference type="Reactome" id="R-HSA-5627117">
    <property type="pathway name" value="RHO GTPases Activate ROCKs"/>
</dbReference>
<dbReference type="Reactome" id="R-HSA-5627123">
    <property type="pathway name" value="RHO GTPases activate PAKs"/>
</dbReference>
<dbReference type="SignaLink" id="O14950"/>
<dbReference type="SIGNOR" id="O14950"/>
<dbReference type="BioGRID-ORCS" id="103910">
    <property type="hits" value="34 hits in 1083 CRISPR screens"/>
</dbReference>
<dbReference type="BioGRID-ORCS" id="10627">
    <property type="hits" value="89 hits in 1078 CRISPR screens"/>
</dbReference>
<dbReference type="CD-CODE" id="FB4E32DD">
    <property type="entry name" value="Presynaptic clusters and postsynaptic densities"/>
</dbReference>
<dbReference type="ChiTaRS" id="MYL12B">
    <property type="organism name" value="human"/>
</dbReference>
<dbReference type="Pharos" id="O14950">
    <property type="development level" value="Tbio"/>
</dbReference>
<dbReference type="PRO" id="PR:O14950"/>
<dbReference type="Proteomes" id="UP000005640">
    <property type="component" value="Chromosome 18"/>
</dbReference>
<dbReference type="RNAct" id="O14950">
    <property type="molecule type" value="protein"/>
</dbReference>
<dbReference type="Bgee" id="ENSG00000118680">
    <property type="expression patterns" value="Expressed in gingival epithelium and 199 other cell types or tissues"/>
</dbReference>
<dbReference type="GO" id="GO:0045177">
    <property type="term" value="C:apical part of cell"/>
    <property type="evidence" value="ECO:0007669"/>
    <property type="project" value="Ensembl"/>
</dbReference>
<dbReference type="GO" id="GO:0005903">
    <property type="term" value="C:brush border"/>
    <property type="evidence" value="ECO:0007669"/>
    <property type="project" value="Ensembl"/>
</dbReference>
<dbReference type="GO" id="GO:0005938">
    <property type="term" value="C:cell cortex"/>
    <property type="evidence" value="ECO:0000314"/>
    <property type="project" value="UniProtKB"/>
</dbReference>
<dbReference type="GO" id="GO:0005737">
    <property type="term" value="C:cytoplasm"/>
    <property type="evidence" value="ECO:0000318"/>
    <property type="project" value="GO_Central"/>
</dbReference>
<dbReference type="GO" id="GO:0005829">
    <property type="term" value="C:cytosol"/>
    <property type="evidence" value="ECO:0000304"/>
    <property type="project" value="Reactome"/>
</dbReference>
<dbReference type="GO" id="GO:0070062">
    <property type="term" value="C:extracellular exosome"/>
    <property type="evidence" value="ECO:0007005"/>
    <property type="project" value="UniProtKB"/>
</dbReference>
<dbReference type="GO" id="GO:0030016">
    <property type="term" value="C:myofibril"/>
    <property type="evidence" value="ECO:0000318"/>
    <property type="project" value="GO_Central"/>
</dbReference>
<dbReference type="GO" id="GO:0016460">
    <property type="term" value="C:myosin II complex"/>
    <property type="evidence" value="ECO:0000318"/>
    <property type="project" value="GO_Central"/>
</dbReference>
<dbReference type="GO" id="GO:0001725">
    <property type="term" value="C:stress fiber"/>
    <property type="evidence" value="ECO:0000318"/>
    <property type="project" value="GO_Central"/>
</dbReference>
<dbReference type="GO" id="GO:0030018">
    <property type="term" value="C:Z disc"/>
    <property type="evidence" value="ECO:0007669"/>
    <property type="project" value="Ensembl"/>
</dbReference>
<dbReference type="GO" id="GO:0005509">
    <property type="term" value="F:calcium ion binding"/>
    <property type="evidence" value="ECO:0007669"/>
    <property type="project" value="InterPro"/>
</dbReference>
<dbReference type="GO" id="GO:0032036">
    <property type="term" value="F:myosin heavy chain binding"/>
    <property type="evidence" value="ECO:0000318"/>
    <property type="project" value="GO_Central"/>
</dbReference>
<dbReference type="GO" id="GO:0008360">
    <property type="term" value="P:regulation of cell shape"/>
    <property type="evidence" value="ECO:0007669"/>
    <property type="project" value="Ensembl"/>
</dbReference>
<dbReference type="CDD" id="cd00051">
    <property type="entry name" value="EFh"/>
    <property type="match status" value="1"/>
</dbReference>
<dbReference type="FunFam" id="1.10.238.10:FF:000010">
    <property type="entry name" value="Myosin regulatory light chain 2, atrial isoform"/>
    <property type="match status" value="1"/>
</dbReference>
<dbReference type="FunFam" id="1.10.238.10:FF:000007">
    <property type="entry name" value="Putative myosin regulatory light chain sqh"/>
    <property type="match status" value="1"/>
</dbReference>
<dbReference type="Gene3D" id="1.10.238.10">
    <property type="entry name" value="EF-hand"/>
    <property type="match status" value="2"/>
</dbReference>
<dbReference type="InterPro" id="IPR011992">
    <property type="entry name" value="EF-hand-dom_pair"/>
</dbReference>
<dbReference type="InterPro" id="IPR018247">
    <property type="entry name" value="EF_Hand_1_Ca_BS"/>
</dbReference>
<dbReference type="InterPro" id="IPR015070">
    <property type="entry name" value="EF_hand_DJBP"/>
</dbReference>
<dbReference type="InterPro" id="IPR002048">
    <property type="entry name" value="EF_hand_dom"/>
</dbReference>
<dbReference type="InterPro" id="IPR050403">
    <property type="entry name" value="Myosin_RLC"/>
</dbReference>
<dbReference type="PANTHER" id="PTHR23049">
    <property type="entry name" value="MYOSIN REGULATORY LIGHT CHAIN 2"/>
    <property type="match status" value="1"/>
</dbReference>
<dbReference type="Pfam" id="PF08976">
    <property type="entry name" value="EF-hand_11"/>
    <property type="match status" value="1"/>
</dbReference>
<dbReference type="Pfam" id="PF13499">
    <property type="entry name" value="EF-hand_7"/>
    <property type="match status" value="1"/>
</dbReference>
<dbReference type="SMART" id="SM00054">
    <property type="entry name" value="EFh"/>
    <property type="match status" value="2"/>
</dbReference>
<dbReference type="SUPFAM" id="SSF47473">
    <property type="entry name" value="EF-hand"/>
    <property type="match status" value="1"/>
</dbReference>
<dbReference type="PROSITE" id="PS00018">
    <property type="entry name" value="EF_HAND_1"/>
    <property type="match status" value="1"/>
</dbReference>
<dbReference type="PROSITE" id="PS50222">
    <property type="entry name" value="EF_HAND_2"/>
    <property type="match status" value="3"/>
</dbReference>
<name>ML12B_HUMAN</name>
<accession>O14950</accession>
<accession>D3DUH6</accession>
<accession>Q13182</accession>
<accession>Q7Z5Z4</accession>
<reference key="1">
    <citation type="journal article" date="2001" name="Cell Struct. Funct.">
        <title>Diphosphorylated MRLC is required for organization of stress fibers in interphase cells and the contractile ring in dividing cells.</title>
        <authorList>
            <person name="Iwasaki T."/>
            <person name="Murata-Hori M."/>
            <person name="Ishitobi S."/>
            <person name="Hosoya H."/>
        </authorList>
    </citation>
    <scope>NUCLEOTIDE SEQUENCE [MRNA]</scope>
    <scope>PHOSPHORYLATION AT THR-19 AND SER-20</scope>
    <scope>MUTAGENESIS OF 19-THR-SER-20</scope>
</reference>
<reference key="2">
    <citation type="journal article" date="2001" name="J. Smooth Muscle Res.">
        <title>Molecular cloning and sequencing of myosin light chains in human megakaryoblastic leukemia cells.</title>
        <authorList>
            <person name="Watanabe M."/>
            <person name="Kohri M."/>
            <person name="Takaishi M."/>
            <person name="Horie R."/>
            <person name="Higashihara M."/>
        </authorList>
    </citation>
    <scope>NUCLEOTIDE SEQUENCE [MRNA]</scope>
    <scope>TISSUE SPECIFICITY</scope>
</reference>
<reference key="3">
    <citation type="submission" date="1995-04" db="EMBL/GenBank/DDBJ databases">
        <title>Molecular cloning of a novel human myosin regulatory light chain.</title>
        <authorList>
            <person name="Fujiwara T."/>
            <person name="Kawai A."/>
            <person name="Shimizu F."/>
            <person name="Shinomiya K."/>
            <person name="Hirano H."/>
            <person name="Okuno S."/>
            <person name="Ozaki K."/>
            <person name="Katagiri T."/>
            <person name="Takeda S."/>
            <person name="Kuga Y."/>
            <person name="Shimada Y."/>
            <person name="Nagata M."/>
            <person name="Takaichi A."/>
            <person name="Watanabe T."/>
            <person name="Horie M."/>
            <person name="Nakamura Y."/>
            <person name="Takahashi E."/>
            <person name="Hirai Y."/>
        </authorList>
    </citation>
    <scope>NUCLEOTIDE SEQUENCE [MRNA]</scope>
    <source>
        <tissue>Brain</tissue>
    </source>
</reference>
<reference key="4">
    <citation type="submission" date="1995-05" db="EMBL/GenBank/DDBJ databases">
        <title>Human myosin regulatory light chain cDNA homologous to the rat myosin regulatory light chain B (MLC-B).</title>
        <authorList>
            <person name="Brodie S.G."/>
            <person name="Rubin S.E."/>
            <person name="Montoya G.D."/>
            <person name="Garry P.J."/>
            <person name="Williams T.M."/>
        </authorList>
    </citation>
    <scope>NUCLEOTIDE SEQUENCE [MRNA]</scope>
</reference>
<reference key="5">
    <citation type="submission" date="2003-06" db="EMBL/GenBank/DDBJ databases">
        <title>Construction of cDNA expression library from nasopharyngeal carcinoma tissue and screening of antigenic genes.</title>
        <authorList>
            <person name="Shu J."/>
            <person name="Li G."/>
            <person name="He X."/>
        </authorList>
    </citation>
    <scope>NUCLEOTIDE SEQUENCE [MRNA]</scope>
    <source>
        <tissue>Nasopharyngeal carcinoma</tissue>
    </source>
</reference>
<reference key="6">
    <citation type="journal article" date="2004" name="Nat. Genet.">
        <title>Complete sequencing and characterization of 21,243 full-length human cDNAs.</title>
        <authorList>
            <person name="Ota T."/>
            <person name="Suzuki Y."/>
            <person name="Nishikawa T."/>
            <person name="Otsuki T."/>
            <person name="Sugiyama T."/>
            <person name="Irie R."/>
            <person name="Wakamatsu A."/>
            <person name="Hayashi K."/>
            <person name="Sato H."/>
            <person name="Nagai K."/>
            <person name="Kimura K."/>
            <person name="Makita H."/>
            <person name="Sekine M."/>
            <person name="Obayashi M."/>
            <person name="Nishi T."/>
            <person name="Shibahara T."/>
            <person name="Tanaka T."/>
            <person name="Ishii S."/>
            <person name="Yamamoto J."/>
            <person name="Saito K."/>
            <person name="Kawai Y."/>
            <person name="Isono Y."/>
            <person name="Nakamura Y."/>
            <person name="Nagahari K."/>
            <person name="Murakami K."/>
            <person name="Yasuda T."/>
            <person name="Iwayanagi T."/>
            <person name="Wagatsuma M."/>
            <person name="Shiratori A."/>
            <person name="Sudo H."/>
            <person name="Hosoiri T."/>
            <person name="Kaku Y."/>
            <person name="Kodaira H."/>
            <person name="Kondo H."/>
            <person name="Sugawara M."/>
            <person name="Takahashi M."/>
            <person name="Kanda K."/>
            <person name="Yokoi T."/>
            <person name="Furuya T."/>
            <person name="Kikkawa E."/>
            <person name="Omura Y."/>
            <person name="Abe K."/>
            <person name="Kamihara K."/>
            <person name="Katsuta N."/>
            <person name="Sato K."/>
            <person name="Tanikawa M."/>
            <person name="Yamazaki M."/>
            <person name="Ninomiya K."/>
            <person name="Ishibashi T."/>
            <person name="Yamashita H."/>
            <person name="Murakawa K."/>
            <person name="Fujimori K."/>
            <person name="Tanai H."/>
            <person name="Kimata M."/>
            <person name="Watanabe M."/>
            <person name="Hiraoka S."/>
            <person name="Chiba Y."/>
            <person name="Ishida S."/>
            <person name="Ono Y."/>
            <person name="Takiguchi S."/>
            <person name="Watanabe S."/>
            <person name="Yosida M."/>
            <person name="Hotuta T."/>
            <person name="Kusano J."/>
            <person name="Kanehori K."/>
            <person name="Takahashi-Fujii A."/>
            <person name="Hara H."/>
            <person name="Tanase T.-O."/>
            <person name="Nomura Y."/>
            <person name="Togiya S."/>
            <person name="Komai F."/>
            <person name="Hara R."/>
            <person name="Takeuchi K."/>
            <person name="Arita M."/>
            <person name="Imose N."/>
            <person name="Musashino K."/>
            <person name="Yuuki H."/>
            <person name="Oshima A."/>
            <person name="Sasaki N."/>
            <person name="Aotsuka S."/>
            <person name="Yoshikawa Y."/>
            <person name="Matsunawa H."/>
            <person name="Ichihara T."/>
            <person name="Shiohata N."/>
            <person name="Sano S."/>
            <person name="Moriya S."/>
            <person name="Momiyama H."/>
            <person name="Satoh N."/>
            <person name="Takami S."/>
            <person name="Terashima Y."/>
            <person name="Suzuki O."/>
            <person name="Nakagawa S."/>
            <person name="Senoh A."/>
            <person name="Mizoguchi H."/>
            <person name="Goto Y."/>
            <person name="Shimizu F."/>
            <person name="Wakebe H."/>
            <person name="Hishigaki H."/>
            <person name="Watanabe T."/>
            <person name="Sugiyama A."/>
            <person name="Takemoto M."/>
            <person name="Kawakami B."/>
            <person name="Yamazaki M."/>
            <person name="Watanabe K."/>
            <person name="Kumagai A."/>
            <person name="Itakura S."/>
            <person name="Fukuzumi Y."/>
            <person name="Fujimori Y."/>
            <person name="Komiyama M."/>
            <person name="Tashiro H."/>
            <person name="Tanigami A."/>
            <person name="Fujiwara T."/>
            <person name="Ono T."/>
            <person name="Yamada K."/>
            <person name="Fujii Y."/>
            <person name="Ozaki K."/>
            <person name="Hirao M."/>
            <person name="Ohmori Y."/>
            <person name="Kawabata A."/>
            <person name="Hikiji T."/>
            <person name="Kobatake N."/>
            <person name="Inagaki H."/>
            <person name="Ikema Y."/>
            <person name="Okamoto S."/>
            <person name="Okitani R."/>
            <person name="Kawakami T."/>
            <person name="Noguchi S."/>
            <person name="Itoh T."/>
            <person name="Shigeta K."/>
            <person name="Senba T."/>
            <person name="Matsumura K."/>
            <person name="Nakajima Y."/>
            <person name="Mizuno T."/>
            <person name="Morinaga M."/>
            <person name="Sasaki M."/>
            <person name="Togashi T."/>
            <person name="Oyama M."/>
            <person name="Hata H."/>
            <person name="Watanabe M."/>
            <person name="Komatsu T."/>
            <person name="Mizushima-Sugano J."/>
            <person name="Satoh T."/>
            <person name="Shirai Y."/>
            <person name="Takahashi Y."/>
            <person name="Nakagawa K."/>
            <person name="Okumura K."/>
            <person name="Nagase T."/>
            <person name="Nomura N."/>
            <person name="Kikuchi H."/>
            <person name="Masuho Y."/>
            <person name="Yamashita R."/>
            <person name="Nakai K."/>
            <person name="Yada T."/>
            <person name="Nakamura Y."/>
            <person name="Ohara O."/>
            <person name="Isogai T."/>
            <person name="Sugano S."/>
        </authorList>
    </citation>
    <scope>NUCLEOTIDE SEQUENCE [LARGE SCALE MRNA]</scope>
    <source>
        <tissue>Placenta</tissue>
    </source>
</reference>
<reference key="7">
    <citation type="submission" date="2005-09" db="EMBL/GenBank/DDBJ databases">
        <authorList>
            <person name="Mural R.J."/>
            <person name="Istrail S."/>
            <person name="Sutton G.G."/>
            <person name="Florea L."/>
            <person name="Halpern A.L."/>
            <person name="Mobarry C.M."/>
            <person name="Lippert R."/>
            <person name="Walenz B."/>
            <person name="Shatkay H."/>
            <person name="Dew I."/>
            <person name="Miller J.R."/>
            <person name="Flanigan M.J."/>
            <person name="Edwards N.J."/>
            <person name="Bolanos R."/>
            <person name="Fasulo D."/>
            <person name="Halldorsson B.V."/>
            <person name="Hannenhalli S."/>
            <person name="Turner R."/>
            <person name="Yooseph S."/>
            <person name="Lu F."/>
            <person name="Nusskern D.R."/>
            <person name="Shue B.C."/>
            <person name="Zheng X.H."/>
            <person name="Zhong F."/>
            <person name="Delcher A.L."/>
            <person name="Huson D.H."/>
            <person name="Kravitz S.A."/>
            <person name="Mouchard L."/>
            <person name="Reinert K."/>
            <person name="Remington K.A."/>
            <person name="Clark A.G."/>
            <person name="Waterman M.S."/>
            <person name="Eichler E.E."/>
            <person name="Adams M.D."/>
            <person name="Hunkapiller M.W."/>
            <person name="Myers E.W."/>
            <person name="Venter J.C."/>
        </authorList>
    </citation>
    <scope>NUCLEOTIDE SEQUENCE [LARGE SCALE GENOMIC DNA]</scope>
</reference>
<reference key="8">
    <citation type="journal article" date="2004" name="Genome Res.">
        <title>The status, quality, and expansion of the NIH full-length cDNA project: the Mammalian Gene Collection (MGC).</title>
        <authorList>
            <consortium name="The MGC Project Team"/>
        </authorList>
    </citation>
    <scope>NUCLEOTIDE SEQUENCE [LARGE SCALE MRNA]</scope>
    <source>
        <tissue>Skin</tissue>
    </source>
</reference>
<reference key="9">
    <citation type="journal article" date="2000" name="J. Biochem.">
        <title>Activation of actin-activated MgATPase activity of myosin II by phosphorylation with MAPK-activated protein kinase-1b (RSK-2).</title>
        <authorList>
            <person name="Suizu F."/>
            <person name="Ueda K."/>
            <person name="Iwasaki T."/>
            <person name="Murata-Hori M."/>
            <person name="Hosoya H."/>
        </authorList>
    </citation>
    <scope>FUNCTION</scope>
</reference>
<reference key="10">
    <citation type="journal article" date="2003" name="Biochem. J.">
        <title>Phosphorylation of myosin II regulatory light chain is necessary for migration of HeLa cells but not for localization of myosin II at the leading edge.</title>
        <authorList>
            <person name="Fumoto K."/>
            <person name="Uchimura T."/>
            <person name="Iwasaki T."/>
            <person name="Ueda K."/>
            <person name="Hosoya H."/>
        </authorList>
    </citation>
    <scope>PHOSPHORYLATION AT THR-19 AND SER-20</scope>
    <scope>MUTAGENESIS OF 19-THR-SER-20</scope>
</reference>
<reference key="11">
    <citation type="journal article" date="2003" name="Mol. Biol. Cell">
        <title>Myosin motors and not actin comets are mediators of the actin-based Golgi-to-endoplasmic reticulum protein transport.</title>
        <authorList>
            <person name="Duran J.M."/>
            <person name="Valderrama F."/>
            <person name="Castel S."/>
            <person name="Magdalena J."/>
            <person name="Tomas M."/>
            <person name="Hosoya H."/>
            <person name="Renau-Piqueras J."/>
            <person name="Malhotra V."/>
            <person name="Egea G."/>
        </authorList>
    </citation>
    <scope>MUTAGENESIS OF 19-THR-SER-20</scope>
</reference>
<reference key="12">
    <citation type="journal article" date="2005" name="Biochem. Biophys. Res. Commun.">
        <title>Epigallocatechin-3-O-gallate disrupts stress fibers and the contractile ring by reducing myosin regulatory light chain phosphorylation mediated through the target molecule 67 kDa laminin receptor.</title>
        <authorList>
            <person name="Umeda D."/>
            <person name="Tachibana H."/>
            <person name="Yamada K."/>
        </authorList>
    </citation>
    <scope>PHOSPHORYLATION AT THR-19 AND SER-20</scope>
</reference>
<reference key="13">
    <citation type="journal article" date="2006" name="Arch. Biochem. Biophys.">
        <title>Novel ZIP kinase isoform lacks leucine zipper.</title>
        <authorList>
            <person name="Takamoto N."/>
            <person name="Komatsu S."/>
            <person name="Komaba S."/>
            <person name="Niiro N."/>
            <person name="Ikebe M."/>
        </authorList>
    </citation>
    <scope>PHOSPHORYLATION BY ZIPK/DAPK3</scope>
</reference>
<reference key="14">
    <citation type="journal article" date="2008" name="J. Smooth Muscle Res.">
        <title>Smooth muscle type isoform of 20 kDa myosin light chain is expressed in monocyte/macrophage cell lineage.</title>
        <authorList>
            <person name="Higashihara M."/>
            <person name="Watanabe M."/>
            <person name="Usuda S."/>
            <person name="Miyazaki K."/>
        </authorList>
    </citation>
    <scope>TISSUE SPECIFICITY</scope>
</reference>
<reference key="15">
    <citation type="journal article" date="2014" name="J. Proteomics">
        <title>An enzyme assisted RP-RPLC approach for in-depth analysis of human liver phosphoproteome.</title>
        <authorList>
            <person name="Bian Y."/>
            <person name="Song C."/>
            <person name="Cheng K."/>
            <person name="Dong M."/>
            <person name="Wang F."/>
            <person name="Huang J."/>
            <person name="Sun D."/>
            <person name="Wang L."/>
            <person name="Ye M."/>
            <person name="Zou H."/>
        </authorList>
    </citation>
    <scope>IDENTIFICATION BY MASS SPECTROMETRY [LARGE SCALE ANALYSIS]</scope>
    <source>
        <tissue>Liver</tissue>
    </source>
</reference>
<gene>
    <name type="primary">MYL12B</name>
    <name type="synonym">MRLC2</name>
    <name type="synonym">MYLC2B</name>
</gene>
<sequence length="172" mass="19779">MSSKKAKTKTTKKRPQRATSNVFAMFDQSQIQEFKEAFNMIDQNRDGFIDKEDLHDMLASLGKNPTDAYLDAMMNEAPGPINFTMFLTMFGEKLNGTDPEDVIRNAFACFDEEATGTIQEDYLRELLTTMGDRFTDEEVDELYREAPIDKKGNFNYIEFTRILKHGAKDKDD</sequence>
<evidence type="ECO:0000250" key="1"/>
<evidence type="ECO:0000250" key="2">
    <source>
        <dbReference type="UniProtKB" id="Q3THE2"/>
    </source>
</evidence>
<evidence type="ECO:0000255" key="3">
    <source>
        <dbReference type="PROSITE-ProRule" id="PRU00448"/>
    </source>
</evidence>
<evidence type="ECO:0000256" key="4">
    <source>
        <dbReference type="SAM" id="MobiDB-lite"/>
    </source>
</evidence>
<evidence type="ECO:0000269" key="5">
    <source>
    </source>
</evidence>
<evidence type="ECO:0000269" key="6">
    <source>
    </source>
</evidence>
<evidence type="ECO:0000269" key="7">
    <source>
    </source>
</evidence>
<evidence type="ECO:0000269" key="8">
    <source>
    </source>
</evidence>
<evidence type="ECO:0000269" key="9">
    <source>
    </source>
</evidence>
<evidence type="ECO:0000269" key="10">
    <source>
    </source>
</evidence>
<evidence type="ECO:0000269" key="11">
    <source>
    </source>
</evidence>
<evidence type="ECO:0000269" key="12">
    <source>
    </source>
</evidence>
<evidence type="ECO:0000305" key="13"/>
<proteinExistence type="evidence at protein level"/>
<keyword id="KW-0106">Calcium</keyword>
<keyword id="KW-0479">Metal-binding</keyword>
<keyword id="KW-0505">Motor protein</keyword>
<keyword id="KW-0514">Muscle protein</keyword>
<keyword id="KW-0518">Myosin</keyword>
<keyword id="KW-0597">Phosphoprotein</keyword>
<keyword id="KW-1267">Proteomics identification</keyword>
<keyword id="KW-1185">Reference proteome</keyword>
<keyword id="KW-0677">Repeat</keyword>
<organism>
    <name type="scientific">Homo sapiens</name>
    <name type="common">Human</name>
    <dbReference type="NCBI Taxonomy" id="9606"/>
    <lineage>
        <taxon>Eukaryota</taxon>
        <taxon>Metazoa</taxon>
        <taxon>Chordata</taxon>
        <taxon>Craniata</taxon>
        <taxon>Vertebrata</taxon>
        <taxon>Euteleostomi</taxon>
        <taxon>Mammalia</taxon>
        <taxon>Eutheria</taxon>
        <taxon>Euarchontoglires</taxon>
        <taxon>Primates</taxon>
        <taxon>Haplorrhini</taxon>
        <taxon>Catarrhini</taxon>
        <taxon>Hominidae</taxon>
        <taxon>Homo</taxon>
    </lineage>
</organism>
<protein>
    <recommendedName>
        <fullName>Myosin regulatory light chain 12B</fullName>
    </recommendedName>
    <alternativeName>
        <fullName>MLC-2A</fullName>
        <shortName>MLC-2</shortName>
    </alternativeName>
    <alternativeName>
        <fullName>Myosin regulatory light chain 2-B, smooth muscle isoform</fullName>
    </alternativeName>
    <alternativeName>
        <fullName>Myosin regulatory light chain 20 kDa</fullName>
        <shortName>MLC20</shortName>
    </alternativeName>
    <alternativeName>
        <fullName>Myosin regulatory light chain MRLC2</fullName>
    </alternativeName>
    <alternativeName>
        <fullName>SHUJUN-1</fullName>
    </alternativeName>
</protein>
<feature type="chain" id="PRO_0000349364" description="Myosin regulatory light chain 12B">
    <location>
        <begin position="1"/>
        <end position="172"/>
    </location>
</feature>
<feature type="domain" description="EF-hand 1" evidence="3">
    <location>
        <begin position="29"/>
        <end position="64"/>
    </location>
</feature>
<feature type="domain" description="EF-hand 2" evidence="3">
    <location>
        <begin position="98"/>
        <end position="133"/>
    </location>
</feature>
<feature type="domain" description="EF-hand 3" evidence="3">
    <location>
        <begin position="134"/>
        <end position="169"/>
    </location>
</feature>
<feature type="region of interest" description="Disordered" evidence="4">
    <location>
        <begin position="1"/>
        <end position="20"/>
    </location>
</feature>
<feature type="compositionally biased region" description="Basic residues" evidence="4">
    <location>
        <begin position="1"/>
        <end position="16"/>
    </location>
</feature>
<feature type="binding site" evidence="3">
    <location>
        <position position="42"/>
    </location>
    <ligand>
        <name>Ca(2+)</name>
        <dbReference type="ChEBI" id="CHEBI:29108"/>
    </ligand>
</feature>
<feature type="binding site" evidence="3">
    <location>
        <position position="44"/>
    </location>
    <ligand>
        <name>Ca(2+)</name>
        <dbReference type="ChEBI" id="CHEBI:29108"/>
    </ligand>
</feature>
<feature type="binding site" evidence="3">
    <location>
        <position position="46"/>
    </location>
    <ligand>
        <name>Ca(2+)</name>
        <dbReference type="ChEBI" id="CHEBI:29108"/>
    </ligand>
</feature>
<feature type="binding site" evidence="3">
    <location>
        <position position="53"/>
    </location>
    <ligand>
        <name>Ca(2+)</name>
        <dbReference type="ChEBI" id="CHEBI:29108"/>
    </ligand>
</feature>
<feature type="modified residue" description="Phosphothreonine; by MLCK and ZIPK/DAPK3" evidence="7 8 10">
    <location>
        <position position="19"/>
    </location>
</feature>
<feature type="modified residue" description="Phosphoserine; by MLCK and ZIPK/DAPK3" evidence="7 8 10">
    <location>
        <position position="20"/>
    </location>
</feature>
<feature type="sequence variant" id="VAR_046371" description="In dbSNP:rs14720.">
    <original>E</original>
    <variation>G</variation>
    <location>
        <position position="141"/>
    </location>
</feature>
<feature type="mutagenesis site" description="Shows a decrease in the number of actin filament bundles." evidence="7 8 9">
    <original>TS</original>
    <variation>AA</variation>
    <location>
        <begin position="19"/>
        <end position="20"/>
    </location>
</feature>
<feature type="mutagenesis site" description="Shows a larger number of actin filament bundles." evidence="7 8 9">
    <original>TS</original>
    <variation>DD</variation>
    <location>
        <begin position="19"/>
        <end position="20"/>
    </location>
</feature>
<feature type="sequence conflict" description="In Ref. 5; AAP73808." evidence="13" ref="5">
    <original>A</original>
    <variation>V</variation>
    <location>
        <position position="72"/>
    </location>
</feature>
<feature type="sequence conflict" description="In Ref. 5; AAP73808." evidence="13" ref="5">
    <original>M</original>
    <variation>T</variation>
    <location>
        <position position="89"/>
    </location>
</feature>
<feature type="sequence conflict" description="In Ref. 5; AAP73808." evidence="13" ref="5">
    <original>R</original>
    <variation>G</variation>
    <location>
        <position position="104"/>
    </location>
</feature>
<feature type="sequence conflict" description="In Ref. 3; BAA23323." evidence="13" ref="3">
    <original>E</original>
    <variation>G</variation>
    <location>
        <position position="138"/>
    </location>
</feature>